<keyword id="KW-0378">Hydrolase</keyword>
<keyword id="KW-0479">Metal-binding</keyword>
<keyword id="KW-0539">Nucleus</keyword>
<keyword id="KW-0904">Protein phosphatase</keyword>
<keyword id="KW-1185">Reference proteome</keyword>
<keyword id="KW-0862">Zinc</keyword>
<keyword id="KW-0863">Zinc-finger</keyword>
<proteinExistence type="evidence at transcript level"/>
<accession>A8DYY5</accession>
<accession>A1A6P2</accession>
<accession>A1A6T3</accession>
<accession>A1A6V6</accession>
<evidence type="ECO:0000250" key="1"/>
<evidence type="ECO:0000255" key="2">
    <source>
        <dbReference type="PROSITE-ProRule" id="PRU00812"/>
    </source>
</evidence>
<evidence type="ECO:0000305" key="3"/>
<dbReference type="EC" id="3.1.3.16"/>
<dbReference type="EMBL" id="AE014134">
    <property type="protein sequence ID" value="ABV53661.1"/>
    <property type="molecule type" value="Genomic_DNA"/>
</dbReference>
<dbReference type="EMBL" id="BT029562">
    <property type="protein sequence ID" value="ABL75622.1"/>
    <property type="molecule type" value="mRNA"/>
</dbReference>
<dbReference type="EMBL" id="BT029604">
    <property type="protein sequence ID" value="ABL75663.1"/>
    <property type="molecule type" value="mRNA"/>
</dbReference>
<dbReference type="EMBL" id="BT029627">
    <property type="protein sequence ID" value="ABL75686.1"/>
    <property type="status" value="ALT_INIT"/>
    <property type="molecule type" value="mRNA"/>
</dbReference>
<dbReference type="RefSeq" id="NP_001097134.1">
    <property type="nucleotide sequence ID" value="NM_001103664.2"/>
</dbReference>
<dbReference type="SMR" id="A8DYY5"/>
<dbReference type="FunCoup" id="A8DYY5">
    <property type="interactions" value="44"/>
</dbReference>
<dbReference type="STRING" id="7227.FBpp0111291"/>
<dbReference type="PaxDb" id="7227-FBpp0111291"/>
<dbReference type="DNASU" id="5740752"/>
<dbReference type="EnsemblMetazoa" id="FBtr0112376">
    <property type="protein sequence ID" value="FBpp0111291"/>
    <property type="gene ID" value="FBgn0085212"/>
</dbReference>
<dbReference type="GeneID" id="5740752"/>
<dbReference type="KEGG" id="dme:Dmel_CG34183"/>
<dbReference type="UCSC" id="CG34183-RA">
    <property type="organism name" value="d. melanogaster"/>
</dbReference>
<dbReference type="AGR" id="FB:FBgn0085212"/>
<dbReference type="FlyBase" id="FBgn0085212">
    <property type="gene designation" value="CG34183"/>
</dbReference>
<dbReference type="VEuPathDB" id="VectorBase:FBgn0085212"/>
<dbReference type="eggNOG" id="KOG4780">
    <property type="taxonomic scope" value="Eukaryota"/>
</dbReference>
<dbReference type="GeneTree" id="ENSGT00390000017965"/>
<dbReference type="HOGENOM" id="CLU_121614_0_0_1"/>
<dbReference type="InParanoid" id="A8DYY5"/>
<dbReference type="OMA" id="HINKLCG"/>
<dbReference type="OrthoDB" id="2590500at2759"/>
<dbReference type="PhylomeDB" id="A8DYY5"/>
<dbReference type="BioGRID-ORCS" id="5740752">
    <property type="hits" value="1 hit in 1 CRISPR screen"/>
</dbReference>
<dbReference type="GenomeRNAi" id="5740752"/>
<dbReference type="PRO" id="PR:A8DYY5"/>
<dbReference type="Proteomes" id="UP000000803">
    <property type="component" value="Chromosome 2L"/>
</dbReference>
<dbReference type="Bgee" id="FBgn0085212">
    <property type="expression patterns" value="Expressed in adult oenocyte (Drosophila) in adult thorax and 44 other cell types or tissues"/>
</dbReference>
<dbReference type="ExpressionAtlas" id="A8DYY5">
    <property type="expression patterns" value="baseline and differential"/>
</dbReference>
<dbReference type="GO" id="GO:0005737">
    <property type="term" value="C:cytoplasm"/>
    <property type="evidence" value="ECO:0000250"/>
    <property type="project" value="FlyBase"/>
</dbReference>
<dbReference type="GO" id="GO:0005634">
    <property type="term" value="C:nucleus"/>
    <property type="evidence" value="ECO:0000250"/>
    <property type="project" value="FlyBase"/>
</dbReference>
<dbReference type="GO" id="GO:0043175">
    <property type="term" value="F:RNA polymerase core enzyme binding"/>
    <property type="evidence" value="ECO:0007669"/>
    <property type="project" value="InterPro"/>
</dbReference>
<dbReference type="GO" id="GO:0008420">
    <property type="term" value="F:RNA polymerase II CTD heptapeptide repeat phosphatase activity"/>
    <property type="evidence" value="ECO:0000250"/>
    <property type="project" value="FlyBase"/>
</dbReference>
<dbReference type="GO" id="GO:0008270">
    <property type="term" value="F:zinc ion binding"/>
    <property type="evidence" value="ECO:0007669"/>
    <property type="project" value="UniProtKB-KW"/>
</dbReference>
<dbReference type="FunFam" id="1.25.40.820:FF:000008">
    <property type="entry name" value="putative RNA polymerase II subunit B1 CTD phosphatase RPAP2 homolog"/>
    <property type="match status" value="1"/>
</dbReference>
<dbReference type="Gene3D" id="1.25.40.820">
    <property type="match status" value="1"/>
</dbReference>
<dbReference type="InterPro" id="IPR039693">
    <property type="entry name" value="Rtr1/RPAP2"/>
</dbReference>
<dbReference type="InterPro" id="IPR007308">
    <property type="entry name" value="Rtr1/RPAP2_dom"/>
</dbReference>
<dbReference type="InterPro" id="IPR038534">
    <property type="entry name" value="Rtr1/RPAP2_sf"/>
</dbReference>
<dbReference type="PANTHER" id="PTHR14732">
    <property type="entry name" value="RNA POLYMERASE II SUBUNIT B1 CTD PHOSPHATASE RPAP2-RELATED"/>
    <property type="match status" value="1"/>
</dbReference>
<dbReference type="PANTHER" id="PTHR14732:SF0">
    <property type="entry name" value="RNA POLYMERASE II SUBUNIT B1 CTD PHOSPHATASE RPAP2-RELATED"/>
    <property type="match status" value="1"/>
</dbReference>
<dbReference type="Pfam" id="PF04181">
    <property type="entry name" value="RPAP2_Rtr1"/>
    <property type="match status" value="1"/>
</dbReference>
<dbReference type="PROSITE" id="PS51479">
    <property type="entry name" value="ZF_RTR1"/>
    <property type="match status" value="1"/>
</dbReference>
<comment type="function">
    <text evidence="1">Putative RNA polymerase II subunit B1 C-terminal domain (CTD) phosphatase involved in RNA polymerase II transcription regulation.</text>
</comment>
<comment type="catalytic activity">
    <reaction>
        <text>O-phospho-L-seryl-[protein] + H2O = L-seryl-[protein] + phosphate</text>
        <dbReference type="Rhea" id="RHEA:20629"/>
        <dbReference type="Rhea" id="RHEA-COMP:9863"/>
        <dbReference type="Rhea" id="RHEA-COMP:11604"/>
        <dbReference type="ChEBI" id="CHEBI:15377"/>
        <dbReference type="ChEBI" id="CHEBI:29999"/>
        <dbReference type="ChEBI" id="CHEBI:43474"/>
        <dbReference type="ChEBI" id="CHEBI:83421"/>
        <dbReference type="EC" id="3.1.3.16"/>
    </reaction>
</comment>
<comment type="catalytic activity">
    <reaction>
        <text>O-phospho-L-threonyl-[protein] + H2O = L-threonyl-[protein] + phosphate</text>
        <dbReference type="Rhea" id="RHEA:47004"/>
        <dbReference type="Rhea" id="RHEA-COMP:11060"/>
        <dbReference type="Rhea" id="RHEA-COMP:11605"/>
        <dbReference type="ChEBI" id="CHEBI:15377"/>
        <dbReference type="ChEBI" id="CHEBI:30013"/>
        <dbReference type="ChEBI" id="CHEBI:43474"/>
        <dbReference type="ChEBI" id="CHEBI:61977"/>
        <dbReference type="EC" id="3.1.3.16"/>
    </reaction>
</comment>
<comment type="subcellular location">
    <subcellularLocation>
        <location evidence="1">Nucleus</location>
    </subcellularLocation>
</comment>
<comment type="similarity">
    <text evidence="2 3">Belongs to the RPAP2 family.</text>
</comment>
<comment type="sequence caution" evidence="3">
    <conflict type="erroneous initiation">
        <sequence resource="EMBL-CDS" id="ABL75686"/>
    </conflict>
    <text>Extended N-terminus.</text>
</comment>
<sequence>MTTEKGEQLRQQLIAAVVKKRAAIARAHEIVVRLLEPGIPEPEFLSLLCEIGPPNYSDIVDEREINKLCGYPLCSTVLENVPKQKYSISASKNKVYDITERKKFCSGYCFKASEYIKSQVPTSPLWLRDRETRPSFQLLPRNT</sequence>
<organism>
    <name type="scientific">Drosophila melanogaster</name>
    <name type="common">Fruit fly</name>
    <dbReference type="NCBI Taxonomy" id="7227"/>
    <lineage>
        <taxon>Eukaryota</taxon>
        <taxon>Metazoa</taxon>
        <taxon>Ecdysozoa</taxon>
        <taxon>Arthropoda</taxon>
        <taxon>Hexapoda</taxon>
        <taxon>Insecta</taxon>
        <taxon>Pterygota</taxon>
        <taxon>Neoptera</taxon>
        <taxon>Endopterygota</taxon>
        <taxon>Diptera</taxon>
        <taxon>Brachycera</taxon>
        <taxon>Muscomorpha</taxon>
        <taxon>Ephydroidea</taxon>
        <taxon>Drosophilidae</taxon>
        <taxon>Drosophila</taxon>
        <taxon>Sophophora</taxon>
    </lineage>
</organism>
<name>RPAP2_DROME</name>
<gene>
    <name type="ORF">CG34183</name>
</gene>
<reference key="1">
    <citation type="journal article" date="2000" name="Science">
        <title>The genome sequence of Drosophila melanogaster.</title>
        <authorList>
            <person name="Adams M.D."/>
            <person name="Celniker S.E."/>
            <person name="Holt R.A."/>
            <person name="Evans C.A."/>
            <person name="Gocayne J.D."/>
            <person name="Amanatides P.G."/>
            <person name="Scherer S.E."/>
            <person name="Li P.W."/>
            <person name="Hoskins R.A."/>
            <person name="Galle R.F."/>
            <person name="George R.A."/>
            <person name="Lewis S.E."/>
            <person name="Richards S."/>
            <person name="Ashburner M."/>
            <person name="Henderson S.N."/>
            <person name="Sutton G.G."/>
            <person name="Wortman J.R."/>
            <person name="Yandell M.D."/>
            <person name="Zhang Q."/>
            <person name="Chen L.X."/>
            <person name="Brandon R.C."/>
            <person name="Rogers Y.-H.C."/>
            <person name="Blazej R.G."/>
            <person name="Champe M."/>
            <person name="Pfeiffer B.D."/>
            <person name="Wan K.H."/>
            <person name="Doyle C."/>
            <person name="Baxter E.G."/>
            <person name="Helt G."/>
            <person name="Nelson C.R."/>
            <person name="Miklos G.L.G."/>
            <person name="Abril J.F."/>
            <person name="Agbayani A."/>
            <person name="An H.-J."/>
            <person name="Andrews-Pfannkoch C."/>
            <person name="Baldwin D."/>
            <person name="Ballew R.M."/>
            <person name="Basu A."/>
            <person name="Baxendale J."/>
            <person name="Bayraktaroglu L."/>
            <person name="Beasley E.M."/>
            <person name="Beeson K.Y."/>
            <person name="Benos P.V."/>
            <person name="Berman B.P."/>
            <person name="Bhandari D."/>
            <person name="Bolshakov S."/>
            <person name="Borkova D."/>
            <person name="Botchan M.R."/>
            <person name="Bouck J."/>
            <person name="Brokstein P."/>
            <person name="Brottier P."/>
            <person name="Burtis K.C."/>
            <person name="Busam D.A."/>
            <person name="Butler H."/>
            <person name="Cadieu E."/>
            <person name="Center A."/>
            <person name="Chandra I."/>
            <person name="Cherry J.M."/>
            <person name="Cawley S."/>
            <person name="Dahlke C."/>
            <person name="Davenport L.B."/>
            <person name="Davies P."/>
            <person name="de Pablos B."/>
            <person name="Delcher A."/>
            <person name="Deng Z."/>
            <person name="Mays A.D."/>
            <person name="Dew I."/>
            <person name="Dietz S.M."/>
            <person name="Dodson K."/>
            <person name="Doup L.E."/>
            <person name="Downes M."/>
            <person name="Dugan-Rocha S."/>
            <person name="Dunkov B.C."/>
            <person name="Dunn P."/>
            <person name="Durbin K.J."/>
            <person name="Evangelista C.C."/>
            <person name="Ferraz C."/>
            <person name="Ferriera S."/>
            <person name="Fleischmann W."/>
            <person name="Fosler C."/>
            <person name="Gabrielian A.E."/>
            <person name="Garg N.S."/>
            <person name="Gelbart W.M."/>
            <person name="Glasser K."/>
            <person name="Glodek A."/>
            <person name="Gong F."/>
            <person name="Gorrell J.H."/>
            <person name="Gu Z."/>
            <person name="Guan P."/>
            <person name="Harris M."/>
            <person name="Harris N.L."/>
            <person name="Harvey D.A."/>
            <person name="Heiman T.J."/>
            <person name="Hernandez J.R."/>
            <person name="Houck J."/>
            <person name="Hostin D."/>
            <person name="Houston K.A."/>
            <person name="Howland T.J."/>
            <person name="Wei M.-H."/>
            <person name="Ibegwam C."/>
            <person name="Jalali M."/>
            <person name="Kalush F."/>
            <person name="Karpen G.H."/>
            <person name="Ke Z."/>
            <person name="Kennison J.A."/>
            <person name="Ketchum K.A."/>
            <person name="Kimmel B.E."/>
            <person name="Kodira C.D."/>
            <person name="Kraft C.L."/>
            <person name="Kravitz S."/>
            <person name="Kulp D."/>
            <person name="Lai Z."/>
            <person name="Lasko P."/>
            <person name="Lei Y."/>
            <person name="Levitsky A.A."/>
            <person name="Li J.H."/>
            <person name="Li Z."/>
            <person name="Liang Y."/>
            <person name="Lin X."/>
            <person name="Liu X."/>
            <person name="Mattei B."/>
            <person name="McIntosh T.C."/>
            <person name="McLeod M.P."/>
            <person name="McPherson D."/>
            <person name="Merkulov G."/>
            <person name="Milshina N.V."/>
            <person name="Mobarry C."/>
            <person name="Morris J."/>
            <person name="Moshrefi A."/>
            <person name="Mount S.M."/>
            <person name="Moy M."/>
            <person name="Murphy B."/>
            <person name="Murphy L."/>
            <person name="Muzny D.M."/>
            <person name="Nelson D.L."/>
            <person name="Nelson D.R."/>
            <person name="Nelson K.A."/>
            <person name="Nixon K."/>
            <person name="Nusskern D.R."/>
            <person name="Pacleb J.M."/>
            <person name="Palazzolo M."/>
            <person name="Pittman G.S."/>
            <person name="Pan S."/>
            <person name="Pollard J."/>
            <person name="Puri V."/>
            <person name="Reese M.G."/>
            <person name="Reinert K."/>
            <person name="Remington K."/>
            <person name="Saunders R.D.C."/>
            <person name="Scheeler F."/>
            <person name="Shen H."/>
            <person name="Shue B.C."/>
            <person name="Siden-Kiamos I."/>
            <person name="Simpson M."/>
            <person name="Skupski M.P."/>
            <person name="Smith T.J."/>
            <person name="Spier E."/>
            <person name="Spradling A.C."/>
            <person name="Stapleton M."/>
            <person name="Strong R."/>
            <person name="Sun E."/>
            <person name="Svirskas R."/>
            <person name="Tector C."/>
            <person name="Turner R."/>
            <person name="Venter E."/>
            <person name="Wang A.H."/>
            <person name="Wang X."/>
            <person name="Wang Z.-Y."/>
            <person name="Wassarman D.A."/>
            <person name="Weinstock G.M."/>
            <person name="Weissenbach J."/>
            <person name="Williams S.M."/>
            <person name="Woodage T."/>
            <person name="Worley K.C."/>
            <person name="Wu D."/>
            <person name="Yang S."/>
            <person name="Yao Q.A."/>
            <person name="Ye J."/>
            <person name="Yeh R.-F."/>
            <person name="Zaveri J.S."/>
            <person name="Zhan M."/>
            <person name="Zhang G."/>
            <person name="Zhao Q."/>
            <person name="Zheng L."/>
            <person name="Zheng X.H."/>
            <person name="Zhong F.N."/>
            <person name="Zhong W."/>
            <person name="Zhou X."/>
            <person name="Zhu S.C."/>
            <person name="Zhu X."/>
            <person name="Smith H.O."/>
            <person name="Gibbs R.A."/>
            <person name="Myers E.W."/>
            <person name="Rubin G.M."/>
            <person name="Venter J.C."/>
        </authorList>
    </citation>
    <scope>NUCLEOTIDE SEQUENCE [LARGE SCALE GENOMIC DNA]</scope>
    <source>
        <strain>Berkeley</strain>
    </source>
</reference>
<reference key="2">
    <citation type="journal article" date="2002" name="Genome Biol.">
        <title>Annotation of the Drosophila melanogaster euchromatic genome: a systematic review.</title>
        <authorList>
            <person name="Misra S."/>
            <person name="Crosby M.A."/>
            <person name="Mungall C.J."/>
            <person name="Matthews B.B."/>
            <person name="Campbell K.S."/>
            <person name="Hradecky P."/>
            <person name="Huang Y."/>
            <person name="Kaminker J.S."/>
            <person name="Millburn G.H."/>
            <person name="Prochnik S.E."/>
            <person name="Smith C.D."/>
            <person name="Tupy J.L."/>
            <person name="Whitfield E.J."/>
            <person name="Bayraktaroglu L."/>
            <person name="Berman B.P."/>
            <person name="Bettencourt B.R."/>
            <person name="Celniker S.E."/>
            <person name="de Grey A.D.N.J."/>
            <person name="Drysdale R.A."/>
            <person name="Harris N.L."/>
            <person name="Richter J."/>
            <person name="Russo S."/>
            <person name="Schroeder A.J."/>
            <person name="Shu S.Q."/>
            <person name="Stapleton M."/>
            <person name="Yamada C."/>
            <person name="Ashburner M."/>
            <person name="Gelbart W.M."/>
            <person name="Rubin G.M."/>
            <person name="Lewis S.E."/>
        </authorList>
    </citation>
    <scope>GENOME REANNOTATION</scope>
    <source>
        <strain>Berkeley</strain>
    </source>
</reference>
<reference key="3">
    <citation type="submission" date="2006-12" db="EMBL/GenBank/DDBJ databases">
        <authorList>
            <person name="Stapleton M."/>
            <person name="Carlson J."/>
            <person name="Frise E."/>
            <person name="Kapadia B."/>
            <person name="Park S."/>
            <person name="Wan K."/>
            <person name="Yu C."/>
            <person name="Celniker S."/>
        </authorList>
    </citation>
    <scope>NUCLEOTIDE SEQUENCE [LARGE SCALE MRNA]</scope>
    <source>
        <strain>Berkeley</strain>
    </source>
</reference>
<feature type="chain" id="PRO_0000416290" description="Putative RNA polymerase II subunit B1 CTD phosphatase RPAP2 homolog">
    <location>
        <begin position="1"/>
        <end position="143"/>
    </location>
</feature>
<feature type="zinc finger region" description="RTR1-type" evidence="2">
    <location>
        <begin position="46"/>
        <end position="129"/>
    </location>
</feature>
<feature type="binding site" evidence="2">
    <location>
        <position position="69"/>
    </location>
    <ligand>
        <name>Zn(2+)</name>
        <dbReference type="ChEBI" id="CHEBI:29105"/>
    </ligand>
</feature>
<feature type="binding site" evidence="2">
    <location>
        <position position="74"/>
    </location>
    <ligand>
        <name>Zn(2+)</name>
        <dbReference type="ChEBI" id="CHEBI:29105"/>
    </ligand>
</feature>
<feature type="binding site" evidence="2">
    <location>
        <position position="105"/>
    </location>
    <ligand>
        <name>Zn(2+)</name>
        <dbReference type="ChEBI" id="CHEBI:29105"/>
    </ligand>
</feature>
<feature type="binding site" evidence="2">
    <location>
        <position position="109"/>
    </location>
    <ligand>
        <name>Zn(2+)</name>
        <dbReference type="ChEBI" id="CHEBI:29105"/>
    </ligand>
</feature>
<feature type="sequence conflict" description="In Ref. 3; ABL75663." evidence="3" ref="3">
    <location>
        <position position="24"/>
    </location>
</feature>
<protein>
    <recommendedName>
        <fullName>Putative RNA polymerase II subunit B1 CTD phosphatase RPAP2 homolog</fullName>
        <ecNumber>3.1.3.16</ecNumber>
    </recommendedName>
    <alternativeName>
        <fullName>RNA polymerase II-associated protein 2</fullName>
    </alternativeName>
</protein>